<sequence>MVNLGLSRVDDAVAAKHPGLGEYAACQSHAFMKGVFTFVTGTGMAFGLQMFIQRKFPYPLQWSLLVAVVAGSVVSYGVTRVESEKCNNLWLFLETGQLPKDRSTDQRS</sequence>
<evidence type="ECO:0000255" key="1"/>
<evidence type="ECO:0000305" key="2"/>
<evidence type="ECO:0007829" key="3">
    <source>
        <dbReference type="PDB" id="2LOR"/>
    </source>
</evidence>
<keyword id="KW-0002">3D-structure</keyword>
<keyword id="KW-0472">Membrane</keyword>
<keyword id="KW-1267">Proteomics identification</keyword>
<keyword id="KW-1185">Reference proteome</keyword>
<keyword id="KW-0812">Transmembrane</keyword>
<keyword id="KW-1133">Transmembrane helix</keyword>
<feature type="chain" id="PRO_0000279507" description="Transmembrane protein 141">
    <location>
        <begin position="1"/>
        <end position="108"/>
    </location>
</feature>
<feature type="transmembrane region" description="Helical" evidence="1">
    <location>
        <begin position="32"/>
        <end position="52"/>
    </location>
</feature>
<feature type="transmembrane region" description="Helical" evidence="1">
    <location>
        <begin position="58"/>
        <end position="78"/>
    </location>
</feature>
<feature type="strand" evidence="3">
    <location>
        <begin position="3"/>
        <end position="5"/>
    </location>
</feature>
<feature type="helix" evidence="3">
    <location>
        <begin position="6"/>
        <end position="16"/>
    </location>
</feature>
<feature type="helix" evidence="3">
    <location>
        <begin position="20"/>
        <end position="39"/>
    </location>
</feature>
<feature type="helix" evidence="3">
    <location>
        <begin position="40"/>
        <end position="43"/>
    </location>
</feature>
<feature type="helix" evidence="3">
    <location>
        <begin position="44"/>
        <end position="53"/>
    </location>
</feature>
<feature type="strand" evidence="3">
    <location>
        <begin position="56"/>
        <end position="60"/>
    </location>
</feature>
<feature type="helix" evidence="3">
    <location>
        <begin position="62"/>
        <end position="95"/>
    </location>
</feature>
<reference key="1">
    <citation type="journal article" date="2004" name="Nature">
        <title>DNA sequence and analysis of human chromosome 9.</title>
        <authorList>
            <person name="Humphray S.J."/>
            <person name="Oliver K."/>
            <person name="Hunt A.R."/>
            <person name="Plumb R.W."/>
            <person name="Loveland J.E."/>
            <person name="Howe K.L."/>
            <person name="Andrews T.D."/>
            <person name="Searle S."/>
            <person name="Hunt S.E."/>
            <person name="Scott C.E."/>
            <person name="Jones M.C."/>
            <person name="Ainscough R."/>
            <person name="Almeida J.P."/>
            <person name="Ambrose K.D."/>
            <person name="Ashwell R.I.S."/>
            <person name="Babbage A.K."/>
            <person name="Babbage S."/>
            <person name="Bagguley C.L."/>
            <person name="Bailey J."/>
            <person name="Banerjee R."/>
            <person name="Barker D.J."/>
            <person name="Barlow K.F."/>
            <person name="Bates K."/>
            <person name="Beasley H."/>
            <person name="Beasley O."/>
            <person name="Bird C.P."/>
            <person name="Bray-Allen S."/>
            <person name="Brown A.J."/>
            <person name="Brown J.Y."/>
            <person name="Burford D."/>
            <person name="Burrill W."/>
            <person name="Burton J."/>
            <person name="Carder C."/>
            <person name="Carter N.P."/>
            <person name="Chapman J.C."/>
            <person name="Chen Y."/>
            <person name="Clarke G."/>
            <person name="Clark S.Y."/>
            <person name="Clee C.M."/>
            <person name="Clegg S."/>
            <person name="Collier R.E."/>
            <person name="Corby N."/>
            <person name="Crosier M."/>
            <person name="Cummings A.T."/>
            <person name="Davies J."/>
            <person name="Dhami P."/>
            <person name="Dunn M."/>
            <person name="Dutta I."/>
            <person name="Dyer L.W."/>
            <person name="Earthrowl M.E."/>
            <person name="Faulkner L."/>
            <person name="Fleming C.J."/>
            <person name="Frankish A."/>
            <person name="Frankland J.A."/>
            <person name="French L."/>
            <person name="Fricker D.G."/>
            <person name="Garner P."/>
            <person name="Garnett J."/>
            <person name="Ghori J."/>
            <person name="Gilbert J.G.R."/>
            <person name="Glison C."/>
            <person name="Grafham D.V."/>
            <person name="Gribble S."/>
            <person name="Griffiths C."/>
            <person name="Griffiths-Jones S."/>
            <person name="Grocock R."/>
            <person name="Guy J."/>
            <person name="Hall R.E."/>
            <person name="Hammond S."/>
            <person name="Harley J.L."/>
            <person name="Harrison E.S.I."/>
            <person name="Hart E.A."/>
            <person name="Heath P.D."/>
            <person name="Henderson C.D."/>
            <person name="Hopkins B.L."/>
            <person name="Howard P.J."/>
            <person name="Howden P.J."/>
            <person name="Huckle E."/>
            <person name="Johnson C."/>
            <person name="Johnson D."/>
            <person name="Joy A.A."/>
            <person name="Kay M."/>
            <person name="Keenan S."/>
            <person name="Kershaw J.K."/>
            <person name="Kimberley A.M."/>
            <person name="King A."/>
            <person name="Knights A."/>
            <person name="Laird G.K."/>
            <person name="Langford C."/>
            <person name="Lawlor S."/>
            <person name="Leongamornlert D.A."/>
            <person name="Leversha M."/>
            <person name="Lloyd C."/>
            <person name="Lloyd D.M."/>
            <person name="Lovell J."/>
            <person name="Martin S."/>
            <person name="Mashreghi-Mohammadi M."/>
            <person name="Matthews L."/>
            <person name="McLaren S."/>
            <person name="McLay K.E."/>
            <person name="McMurray A."/>
            <person name="Milne S."/>
            <person name="Nickerson T."/>
            <person name="Nisbett J."/>
            <person name="Nordsiek G."/>
            <person name="Pearce A.V."/>
            <person name="Peck A.I."/>
            <person name="Porter K.M."/>
            <person name="Pandian R."/>
            <person name="Pelan S."/>
            <person name="Phillimore B."/>
            <person name="Povey S."/>
            <person name="Ramsey Y."/>
            <person name="Rand V."/>
            <person name="Scharfe M."/>
            <person name="Sehra H.K."/>
            <person name="Shownkeen R."/>
            <person name="Sims S.K."/>
            <person name="Skuce C.D."/>
            <person name="Smith M."/>
            <person name="Steward C.A."/>
            <person name="Swarbreck D."/>
            <person name="Sycamore N."/>
            <person name="Tester J."/>
            <person name="Thorpe A."/>
            <person name="Tracey A."/>
            <person name="Tromans A."/>
            <person name="Thomas D.W."/>
            <person name="Wall M."/>
            <person name="Wallis J.M."/>
            <person name="West A.P."/>
            <person name="Whitehead S.L."/>
            <person name="Willey D.L."/>
            <person name="Williams S.A."/>
            <person name="Wilming L."/>
            <person name="Wray P.W."/>
            <person name="Young L."/>
            <person name="Ashurst J.L."/>
            <person name="Coulson A."/>
            <person name="Blocker H."/>
            <person name="Durbin R.M."/>
            <person name="Sulston J.E."/>
            <person name="Hubbard T."/>
            <person name="Jackson M.J."/>
            <person name="Bentley D.R."/>
            <person name="Beck S."/>
            <person name="Rogers J."/>
            <person name="Dunham I."/>
        </authorList>
    </citation>
    <scope>NUCLEOTIDE SEQUENCE [LARGE SCALE GENOMIC DNA]</scope>
</reference>
<reference key="2">
    <citation type="submission" date="2005-07" db="EMBL/GenBank/DDBJ databases">
        <authorList>
            <person name="Mural R.J."/>
            <person name="Istrail S."/>
            <person name="Sutton G.G."/>
            <person name="Florea L."/>
            <person name="Halpern A.L."/>
            <person name="Mobarry C.M."/>
            <person name="Lippert R."/>
            <person name="Walenz B."/>
            <person name="Shatkay H."/>
            <person name="Dew I."/>
            <person name="Miller J.R."/>
            <person name="Flanigan M.J."/>
            <person name="Edwards N.J."/>
            <person name="Bolanos R."/>
            <person name="Fasulo D."/>
            <person name="Halldorsson B.V."/>
            <person name="Hannenhalli S."/>
            <person name="Turner R."/>
            <person name="Yooseph S."/>
            <person name="Lu F."/>
            <person name="Nusskern D.R."/>
            <person name="Shue B.C."/>
            <person name="Zheng X.H."/>
            <person name="Zhong F."/>
            <person name="Delcher A.L."/>
            <person name="Huson D.H."/>
            <person name="Kravitz S.A."/>
            <person name="Mouchard L."/>
            <person name="Reinert K."/>
            <person name="Remington K.A."/>
            <person name="Clark A.G."/>
            <person name="Waterman M.S."/>
            <person name="Eichler E.E."/>
            <person name="Adams M.D."/>
            <person name="Hunkapiller M.W."/>
            <person name="Myers E.W."/>
            <person name="Venter J.C."/>
        </authorList>
    </citation>
    <scope>NUCLEOTIDE SEQUENCE [LARGE SCALE GENOMIC DNA]</scope>
</reference>
<reference key="3">
    <citation type="journal article" date="2004" name="Genome Res.">
        <title>The status, quality, and expansion of the NIH full-length cDNA project: the Mammalian Gene Collection (MGC).</title>
        <authorList>
            <consortium name="The MGC Project Team"/>
        </authorList>
    </citation>
    <scope>NUCLEOTIDE SEQUENCE [LARGE SCALE MRNA]</scope>
    <source>
        <tissue>Brain</tissue>
    </source>
</reference>
<reference key="4">
    <citation type="journal article" date="2012" name="Proc. Natl. Acad. Sci. U.S.A.">
        <title>N-terminal acetylome analyses and functional insights of the N-terminal acetyltransferase NatB.</title>
        <authorList>
            <person name="Van Damme P."/>
            <person name="Lasa M."/>
            <person name="Polevoda B."/>
            <person name="Gazquez C."/>
            <person name="Elosegui-Artola A."/>
            <person name="Kim D.S."/>
            <person name="De Juan-Pardo E."/>
            <person name="Demeyer K."/>
            <person name="Hole K."/>
            <person name="Larrea E."/>
            <person name="Timmerman E."/>
            <person name="Prieto J."/>
            <person name="Arnesen T."/>
            <person name="Sherman F."/>
            <person name="Gevaert K."/>
            <person name="Aldabe R."/>
        </authorList>
    </citation>
    <scope>IDENTIFICATION BY MASS SPECTROMETRY [LARGE SCALE ANALYSIS]</scope>
</reference>
<reference key="5">
    <citation type="journal article" date="2012" name="Nat. Methods">
        <title>Facile backbone structure determination of human membrane proteins by NMR spectroscopy.</title>
        <authorList>
            <person name="Klammt C."/>
            <person name="Maslennikov I."/>
            <person name="Bayrhuber M."/>
            <person name="Eichmann C."/>
            <person name="Vajpai N."/>
            <person name="Chiu E.J."/>
            <person name="Blain K.Y."/>
            <person name="Esquivies L."/>
            <person name="Kwon J.H."/>
            <person name="Balana B."/>
            <person name="Pieper U."/>
            <person name="Sali A."/>
            <person name="Slesinger P.A."/>
            <person name="Kwiatkowski W."/>
            <person name="Riek R."/>
            <person name="Choe S."/>
        </authorList>
    </citation>
    <scope>STRUCTURE BY NMR</scope>
</reference>
<protein>
    <recommendedName>
        <fullName>Transmembrane protein 141</fullName>
    </recommendedName>
</protein>
<organism>
    <name type="scientific">Homo sapiens</name>
    <name type="common">Human</name>
    <dbReference type="NCBI Taxonomy" id="9606"/>
    <lineage>
        <taxon>Eukaryota</taxon>
        <taxon>Metazoa</taxon>
        <taxon>Chordata</taxon>
        <taxon>Craniata</taxon>
        <taxon>Vertebrata</taxon>
        <taxon>Euteleostomi</taxon>
        <taxon>Mammalia</taxon>
        <taxon>Eutheria</taxon>
        <taxon>Euarchontoglires</taxon>
        <taxon>Primates</taxon>
        <taxon>Haplorrhini</taxon>
        <taxon>Catarrhini</taxon>
        <taxon>Hominidae</taxon>
        <taxon>Homo</taxon>
    </lineage>
</organism>
<accession>Q96I45</accession>
<accession>A6NIZ7</accession>
<accession>Q5T5R5</accession>
<gene>
    <name type="primary">TMEM141</name>
</gene>
<name>TM141_HUMAN</name>
<proteinExistence type="evidence at protein level"/>
<dbReference type="EMBL" id="AL355987">
    <property type="status" value="NOT_ANNOTATED_CDS"/>
    <property type="molecule type" value="Genomic_DNA"/>
</dbReference>
<dbReference type="EMBL" id="CH471090">
    <property type="protein sequence ID" value="EAW88277.1"/>
    <property type="molecule type" value="Genomic_DNA"/>
</dbReference>
<dbReference type="EMBL" id="BC007834">
    <property type="protein sequence ID" value="AAH07834.1"/>
    <property type="molecule type" value="mRNA"/>
</dbReference>
<dbReference type="CCDS" id="CCDS7007.1"/>
<dbReference type="RefSeq" id="NP_116317.1">
    <property type="nucleotide sequence ID" value="NM_032928.4"/>
</dbReference>
<dbReference type="PDB" id="2LOR">
    <property type="method" value="NMR"/>
    <property type="chains" value="A=1-108"/>
</dbReference>
<dbReference type="PDBsum" id="2LOR"/>
<dbReference type="BMRB" id="Q96I45"/>
<dbReference type="SMR" id="Q96I45"/>
<dbReference type="BioGRID" id="124429">
    <property type="interactions" value="9"/>
</dbReference>
<dbReference type="FunCoup" id="Q96I45">
    <property type="interactions" value="20"/>
</dbReference>
<dbReference type="IntAct" id="Q96I45">
    <property type="interactions" value="5"/>
</dbReference>
<dbReference type="STRING" id="9606.ENSP00000290079"/>
<dbReference type="BioMuta" id="TMEM141"/>
<dbReference type="jPOST" id="Q96I45"/>
<dbReference type="MassIVE" id="Q96I45"/>
<dbReference type="PaxDb" id="9606-ENSP00000290079"/>
<dbReference type="PeptideAtlas" id="Q96I45"/>
<dbReference type="ProteomicsDB" id="76811"/>
<dbReference type="Pumba" id="Q96I45"/>
<dbReference type="Antibodypedia" id="45420">
    <property type="antibodies" value="83 antibodies from 17 providers"/>
</dbReference>
<dbReference type="DNASU" id="85014"/>
<dbReference type="Ensembl" id="ENST00000290079.9">
    <property type="protein sequence ID" value="ENSP00000290079.8"/>
    <property type="gene ID" value="ENSG00000244187.8"/>
</dbReference>
<dbReference type="GeneID" id="85014"/>
<dbReference type="KEGG" id="hsa:85014"/>
<dbReference type="MANE-Select" id="ENST00000290079.9">
    <property type="protein sequence ID" value="ENSP00000290079.8"/>
    <property type="RefSeq nucleotide sequence ID" value="NM_032928.4"/>
    <property type="RefSeq protein sequence ID" value="NP_116317.1"/>
</dbReference>
<dbReference type="UCSC" id="uc004cje.5">
    <property type="organism name" value="human"/>
</dbReference>
<dbReference type="AGR" id="HGNC:28211"/>
<dbReference type="CTD" id="85014"/>
<dbReference type="GeneCards" id="TMEM141"/>
<dbReference type="HGNC" id="HGNC:28211">
    <property type="gene designation" value="TMEM141"/>
</dbReference>
<dbReference type="HPA" id="ENSG00000244187">
    <property type="expression patterns" value="Low tissue specificity"/>
</dbReference>
<dbReference type="neXtProt" id="NX_Q96I45"/>
<dbReference type="OpenTargets" id="ENSG00000244187"/>
<dbReference type="PharmGKB" id="PA144596262"/>
<dbReference type="VEuPathDB" id="HostDB:ENSG00000244187"/>
<dbReference type="eggNOG" id="ENOG502SFAD">
    <property type="taxonomic scope" value="Eukaryota"/>
</dbReference>
<dbReference type="GeneTree" id="ENSGT00940000153116"/>
<dbReference type="HOGENOM" id="CLU_163737_0_0_1"/>
<dbReference type="InParanoid" id="Q96I45"/>
<dbReference type="OMA" id="CQSNAFM"/>
<dbReference type="OrthoDB" id="10056589at2759"/>
<dbReference type="PAN-GO" id="Q96I45">
    <property type="GO annotations" value="0 GO annotations based on evolutionary models"/>
</dbReference>
<dbReference type="PhylomeDB" id="Q96I45"/>
<dbReference type="TreeFam" id="TF330755"/>
<dbReference type="PathwayCommons" id="Q96I45"/>
<dbReference type="SignaLink" id="Q96I45"/>
<dbReference type="BioGRID-ORCS" id="85014">
    <property type="hits" value="16 hits in 1156 CRISPR screens"/>
</dbReference>
<dbReference type="ChiTaRS" id="TMEM141">
    <property type="organism name" value="human"/>
</dbReference>
<dbReference type="EvolutionaryTrace" id="Q96I45"/>
<dbReference type="GenomeRNAi" id="85014"/>
<dbReference type="Pharos" id="Q96I45">
    <property type="development level" value="Tdark"/>
</dbReference>
<dbReference type="PRO" id="PR:Q96I45"/>
<dbReference type="Proteomes" id="UP000005640">
    <property type="component" value="Chromosome 9"/>
</dbReference>
<dbReference type="RNAct" id="Q96I45">
    <property type="molecule type" value="protein"/>
</dbReference>
<dbReference type="Bgee" id="ENSG00000244187">
    <property type="expression patterns" value="Expressed in mucosa of transverse colon and 182 other cell types or tissues"/>
</dbReference>
<dbReference type="GO" id="GO:0016020">
    <property type="term" value="C:membrane"/>
    <property type="evidence" value="ECO:0007669"/>
    <property type="project" value="UniProtKB-SubCell"/>
</dbReference>
<dbReference type="GO" id="GO:0005739">
    <property type="term" value="C:mitochondrion"/>
    <property type="evidence" value="ECO:0006056"/>
    <property type="project" value="FlyBase"/>
</dbReference>
<dbReference type="Gene3D" id="1.10.3350.20">
    <property type="entry name" value="Tmem141 protein family"/>
    <property type="match status" value="1"/>
</dbReference>
<dbReference type="InterPro" id="IPR026788">
    <property type="entry name" value="Tmem141"/>
</dbReference>
<dbReference type="InterPro" id="IPR038259">
    <property type="entry name" value="Tmem141_sf"/>
</dbReference>
<dbReference type="PANTHER" id="PTHR47229">
    <property type="entry name" value="TRANSMEMBRANE PROTEIN 141"/>
    <property type="match status" value="1"/>
</dbReference>
<dbReference type="PANTHER" id="PTHR47229:SF1">
    <property type="entry name" value="TRANSMEMBRANE PROTEIN 141"/>
    <property type="match status" value="1"/>
</dbReference>
<dbReference type="Pfam" id="PF15110">
    <property type="entry name" value="TMEM141"/>
    <property type="match status" value="1"/>
</dbReference>
<comment type="interaction">
    <interactant intactId="EBI-17681263">
        <id>Q96I45</id>
    </interactant>
    <interactant intactId="EBI-781551">
        <id>Q9Y282</id>
        <label>ERGIC3</label>
    </interactant>
    <organismsDiffer>false</organismsDiffer>
    <experiments>3</experiments>
</comment>
<comment type="interaction">
    <interactant intactId="EBI-17681263">
        <id>Q96I45</id>
    </interactant>
    <interactant intactId="EBI-18304435">
        <id>Q5JX71</id>
        <label>FAM209A</label>
    </interactant>
    <organismsDiffer>false</organismsDiffer>
    <experiments>3</experiments>
</comment>
<comment type="interaction">
    <interactant intactId="EBI-17681263">
        <id>Q96I45</id>
    </interactant>
    <interactant intactId="EBI-1055254">
        <id>Q8WXH2</id>
        <label>JPH3</label>
    </interactant>
    <organismsDiffer>false</organismsDiffer>
    <experiments>3</experiments>
</comment>
<comment type="subcellular location">
    <subcellularLocation>
        <location evidence="2">Membrane</location>
        <topology evidence="2">Multi-pass membrane protein</topology>
    </subcellularLocation>
</comment>
<comment type="similarity">
    <text evidence="2">Belongs to the TMEM141 family.</text>
</comment>